<keyword id="KW-0694">RNA-binding</keyword>
<keyword id="KW-0804">Transcription</keyword>
<keyword id="KW-0889">Transcription antitermination</keyword>
<keyword id="KW-0805">Transcription regulation</keyword>
<accession>B1J033</accession>
<protein>
    <recommendedName>
        <fullName evidence="1">Transcription antitermination protein NusB</fullName>
    </recommendedName>
    <alternativeName>
        <fullName evidence="1">Antitermination factor NusB</fullName>
    </alternativeName>
</protein>
<name>NUSB_ECOLC</name>
<gene>
    <name evidence="1" type="primary">nusB</name>
    <name type="ordered locus">EcolC_3217</name>
</gene>
<organism>
    <name type="scientific">Escherichia coli (strain ATCC 8739 / DSM 1576 / NBRC 3972 / NCIMB 8545 / WDCM 00012 / Crooks)</name>
    <dbReference type="NCBI Taxonomy" id="481805"/>
    <lineage>
        <taxon>Bacteria</taxon>
        <taxon>Pseudomonadati</taxon>
        <taxon>Pseudomonadota</taxon>
        <taxon>Gammaproteobacteria</taxon>
        <taxon>Enterobacterales</taxon>
        <taxon>Enterobacteriaceae</taxon>
        <taxon>Escherichia</taxon>
    </lineage>
</organism>
<evidence type="ECO:0000255" key="1">
    <source>
        <dbReference type="HAMAP-Rule" id="MF_00073"/>
    </source>
</evidence>
<proteinExistence type="inferred from homology"/>
<dbReference type="EMBL" id="CP000946">
    <property type="protein sequence ID" value="ACA78839.1"/>
    <property type="molecule type" value="Genomic_DNA"/>
</dbReference>
<dbReference type="RefSeq" id="WP_000801125.1">
    <property type="nucleotide sequence ID" value="NZ_MTFT01000010.1"/>
</dbReference>
<dbReference type="BMRB" id="B1J033"/>
<dbReference type="SMR" id="B1J033"/>
<dbReference type="GeneID" id="93777044"/>
<dbReference type="KEGG" id="ecl:EcolC_3217"/>
<dbReference type="HOGENOM" id="CLU_087843_4_1_6"/>
<dbReference type="GO" id="GO:0005829">
    <property type="term" value="C:cytosol"/>
    <property type="evidence" value="ECO:0007669"/>
    <property type="project" value="TreeGrafter"/>
</dbReference>
<dbReference type="GO" id="GO:0003723">
    <property type="term" value="F:RNA binding"/>
    <property type="evidence" value="ECO:0007669"/>
    <property type="project" value="UniProtKB-UniRule"/>
</dbReference>
<dbReference type="GO" id="GO:0006353">
    <property type="term" value="P:DNA-templated transcription termination"/>
    <property type="evidence" value="ECO:0007669"/>
    <property type="project" value="UniProtKB-UniRule"/>
</dbReference>
<dbReference type="GO" id="GO:0031564">
    <property type="term" value="P:transcription antitermination"/>
    <property type="evidence" value="ECO:0007669"/>
    <property type="project" value="UniProtKB-KW"/>
</dbReference>
<dbReference type="CDD" id="cd00619">
    <property type="entry name" value="Terminator_NusB"/>
    <property type="match status" value="1"/>
</dbReference>
<dbReference type="FunFam" id="1.10.940.10:FF:000001">
    <property type="entry name" value="Transcription antitermination factor NusB"/>
    <property type="match status" value="1"/>
</dbReference>
<dbReference type="Gene3D" id="1.10.940.10">
    <property type="entry name" value="NusB-like"/>
    <property type="match status" value="1"/>
</dbReference>
<dbReference type="HAMAP" id="MF_00073">
    <property type="entry name" value="NusB"/>
    <property type="match status" value="1"/>
</dbReference>
<dbReference type="InterPro" id="IPR035926">
    <property type="entry name" value="NusB-like_sf"/>
</dbReference>
<dbReference type="InterPro" id="IPR011605">
    <property type="entry name" value="NusB_fam"/>
</dbReference>
<dbReference type="InterPro" id="IPR006027">
    <property type="entry name" value="NusB_RsmB_TIM44"/>
</dbReference>
<dbReference type="NCBIfam" id="TIGR01951">
    <property type="entry name" value="nusB"/>
    <property type="match status" value="1"/>
</dbReference>
<dbReference type="PANTHER" id="PTHR11078:SF3">
    <property type="entry name" value="ANTITERMINATION NUSB DOMAIN-CONTAINING PROTEIN"/>
    <property type="match status" value="1"/>
</dbReference>
<dbReference type="PANTHER" id="PTHR11078">
    <property type="entry name" value="N UTILIZATION SUBSTANCE PROTEIN B-RELATED"/>
    <property type="match status" value="1"/>
</dbReference>
<dbReference type="Pfam" id="PF01029">
    <property type="entry name" value="NusB"/>
    <property type="match status" value="1"/>
</dbReference>
<dbReference type="SUPFAM" id="SSF48013">
    <property type="entry name" value="NusB-like"/>
    <property type="match status" value="1"/>
</dbReference>
<feature type="chain" id="PRO_1000075187" description="Transcription antitermination protein NusB">
    <location>
        <begin position="1"/>
        <end position="139"/>
    </location>
</feature>
<comment type="function">
    <text evidence="1">Involved in transcription antitermination. Required for transcription of ribosomal RNA (rRNA) genes. Binds specifically to the boxA antiterminator sequence of the ribosomal RNA (rrn) operons.</text>
</comment>
<comment type="similarity">
    <text evidence="1">Belongs to the NusB family.</text>
</comment>
<sequence>MKPAARRRARECAVQALYSWQLSQNDIADVEYQFLAEQDVKDVDVLYFRELLAGVATNTAYLDGLMKPYLSRLLEELGQVEKAVLRIALYELSKRSDVPYKVAINEAIELAKSFGAEDSHKFVNGVLDKAAPVIRPNKK</sequence>
<reference key="1">
    <citation type="submission" date="2008-02" db="EMBL/GenBank/DDBJ databases">
        <title>Complete sequence of Escherichia coli C str. ATCC 8739.</title>
        <authorList>
            <person name="Copeland A."/>
            <person name="Lucas S."/>
            <person name="Lapidus A."/>
            <person name="Glavina del Rio T."/>
            <person name="Dalin E."/>
            <person name="Tice H."/>
            <person name="Bruce D."/>
            <person name="Goodwin L."/>
            <person name="Pitluck S."/>
            <person name="Kiss H."/>
            <person name="Brettin T."/>
            <person name="Detter J.C."/>
            <person name="Han C."/>
            <person name="Kuske C.R."/>
            <person name="Schmutz J."/>
            <person name="Larimer F."/>
            <person name="Land M."/>
            <person name="Hauser L."/>
            <person name="Kyrpides N."/>
            <person name="Mikhailova N."/>
            <person name="Ingram L."/>
            <person name="Richardson P."/>
        </authorList>
    </citation>
    <scope>NUCLEOTIDE SEQUENCE [LARGE SCALE GENOMIC DNA]</scope>
    <source>
        <strain>ATCC 8739 / DSM 1576 / NBRC 3972 / NCIMB 8545 / WDCM 00012 / Crooks</strain>
    </source>
</reference>